<comment type="similarity">
    <text evidence="2">Belongs to the heat shock protein 70 family.</text>
</comment>
<feature type="chain" id="PRO_0000078287" description="Heat shock 70 kDa protein">
    <location>
        <begin position="1"/>
        <end position="644"/>
    </location>
</feature>
<feature type="region of interest" description="Disordered" evidence="1">
    <location>
        <begin position="617"/>
        <end position="644"/>
    </location>
</feature>
<feature type="compositionally biased region" description="Polar residues" evidence="1">
    <location>
        <begin position="627"/>
        <end position="638"/>
    </location>
</feature>
<reference key="1">
    <citation type="submission" date="1995-10" db="EMBL/GenBank/DDBJ databases">
        <authorList>
            <person name="Hargis M.T."/>
            <person name="Goff H."/>
            <person name="Dauble D.D."/>
            <person name="Howard S."/>
            <person name="Candido P."/>
            <person name="Hickey E."/>
            <person name="Weber L.A."/>
        </authorList>
    </citation>
    <scope>NUCLEOTIDE SEQUENCE [MRNA]</scope>
    <source>
        <strain>ATCC CRL-1681</strain>
    </source>
</reference>
<protein>
    <recommendedName>
        <fullName>Heat shock 70 kDa protein</fullName>
        <shortName>HSP70</shortName>
    </recommendedName>
</protein>
<accession>Q91233</accession>
<sequence>MSSAKGPSIGIDLGTTYSCVGVFQHGKVEIIANDQGNRTTPSYVAFTDTERLIGDAAKNQVAMNPNNTVFDAKRLIGRKFNDQVVQADMKHWPFKVVSDGGKPKVQVDYKGENKSFNPEEISSMVLVKMREIAEAYLGQKVSNAVITVPAYFNDSQRQATKDAGVIAGLNVLRIINEPTAAAIAYGMDKGMSRERNVLIFDLGGGTFDVSILTIEDGIFEVKATAGDTHLGGEDFDNRLVSHFVEEFKRKHKKDISQNKRALRRLRTACERAKRTLSSSSQASIEIDSLFEGIDFYTSITRARFEEMCSDLFRGTLEPVEKALRDAKMDKAQIHDVVLVGGSTRIPKVQKLLQDFFNGRELNKSINPDEAVAYGAAIQAAILSGDKSENVQDLLLLDVAPLSLGIETAGGVMTALIKRNTTIPSKQTQTFTTYSDNQPGVMIQVYEGERAMTKDNNLLGKFELSGIPPAPRGVPQIEVTFDIDANGILNVSAVDKSTGKENKITITNDKGRLSKEDIERMVQDADKYKAEDDAQREKIAAKNSLESYAFNMKSSVEDDNMKGKISQEDKKKVVDRCDQTISWLENNQLGDKEEYEHQLKELEKVCQPIITKLYQQGGMPTGCCGDQARTSSGDSSQGPTIEEID</sequence>
<organism>
    <name type="scientific">Oncorhynchus tshawytscha</name>
    <name type="common">Chinook salmon</name>
    <name type="synonym">Salmo tshawytscha</name>
    <dbReference type="NCBI Taxonomy" id="74940"/>
    <lineage>
        <taxon>Eukaryota</taxon>
        <taxon>Metazoa</taxon>
        <taxon>Chordata</taxon>
        <taxon>Craniata</taxon>
        <taxon>Vertebrata</taxon>
        <taxon>Euteleostomi</taxon>
        <taxon>Actinopterygii</taxon>
        <taxon>Neopterygii</taxon>
        <taxon>Teleostei</taxon>
        <taxon>Protacanthopterygii</taxon>
        <taxon>Salmoniformes</taxon>
        <taxon>Salmonidae</taxon>
        <taxon>Salmoninae</taxon>
        <taxon>Oncorhynchus</taxon>
    </lineage>
</organism>
<name>HSP70_ONCTS</name>
<dbReference type="EMBL" id="U35064">
    <property type="protein sequence ID" value="AAA78276.1"/>
    <property type="molecule type" value="mRNA"/>
</dbReference>
<dbReference type="SMR" id="Q91233"/>
<dbReference type="OrthoDB" id="2401965at2759"/>
<dbReference type="Proteomes" id="UP000694402">
    <property type="component" value="Unplaced"/>
</dbReference>
<dbReference type="GO" id="GO:0005737">
    <property type="term" value="C:cytoplasm"/>
    <property type="evidence" value="ECO:0000250"/>
    <property type="project" value="AgBase"/>
</dbReference>
<dbReference type="GO" id="GO:0005634">
    <property type="term" value="C:nucleus"/>
    <property type="evidence" value="ECO:0000250"/>
    <property type="project" value="AgBase"/>
</dbReference>
<dbReference type="GO" id="GO:0005524">
    <property type="term" value="F:ATP binding"/>
    <property type="evidence" value="ECO:0007669"/>
    <property type="project" value="UniProtKB-KW"/>
</dbReference>
<dbReference type="GO" id="GO:0140662">
    <property type="term" value="F:ATP-dependent protein folding chaperone"/>
    <property type="evidence" value="ECO:0007669"/>
    <property type="project" value="InterPro"/>
</dbReference>
<dbReference type="CDD" id="cd10233">
    <property type="entry name" value="ASKHA_NBD_HSP70_HSPA1"/>
    <property type="match status" value="1"/>
</dbReference>
<dbReference type="FunFam" id="2.60.34.10:FF:000002">
    <property type="entry name" value="Heat shock 70 kDa"/>
    <property type="match status" value="1"/>
</dbReference>
<dbReference type="FunFam" id="3.30.420.40:FF:000172">
    <property type="entry name" value="Heat shock 70 kDa protein"/>
    <property type="match status" value="1"/>
</dbReference>
<dbReference type="FunFam" id="1.20.1270.10:FF:000025">
    <property type="entry name" value="heat shock 70 kDa protein-like"/>
    <property type="match status" value="1"/>
</dbReference>
<dbReference type="FunFam" id="3.30.30.30:FF:000001">
    <property type="entry name" value="heat shock 70 kDa protein-like"/>
    <property type="match status" value="1"/>
</dbReference>
<dbReference type="FunFam" id="3.30.420.40:FF:000135">
    <property type="entry name" value="Heat shock cognate 71 kDa protein"/>
    <property type="match status" value="1"/>
</dbReference>
<dbReference type="FunFam" id="3.90.640.10:FF:000134">
    <property type="entry name" value="Heat shock cognate 71 kDa protein"/>
    <property type="match status" value="1"/>
</dbReference>
<dbReference type="FunFam" id="3.30.420.40:FF:000026">
    <property type="entry name" value="Heat shock protein 70"/>
    <property type="match status" value="1"/>
</dbReference>
<dbReference type="Gene3D" id="1.20.1270.10">
    <property type="match status" value="1"/>
</dbReference>
<dbReference type="Gene3D" id="3.30.30.30">
    <property type="match status" value="1"/>
</dbReference>
<dbReference type="Gene3D" id="3.30.420.40">
    <property type="match status" value="2"/>
</dbReference>
<dbReference type="Gene3D" id="3.90.640.10">
    <property type="entry name" value="Actin, Chain A, domain 4"/>
    <property type="match status" value="1"/>
</dbReference>
<dbReference type="Gene3D" id="2.60.34.10">
    <property type="entry name" value="Substrate Binding Domain Of DNAk, Chain A, domain 1"/>
    <property type="match status" value="1"/>
</dbReference>
<dbReference type="InterPro" id="IPR043129">
    <property type="entry name" value="ATPase_NBD"/>
</dbReference>
<dbReference type="InterPro" id="IPR018181">
    <property type="entry name" value="Heat_shock_70_CS"/>
</dbReference>
<dbReference type="InterPro" id="IPR029048">
    <property type="entry name" value="HSP70_C_sf"/>
</dbReference>
<dbReference type="InterPro" id="IPR029047">
    <property type="entry name" value="HSP70_peptide-bd_sf"/>
</dbReference>
<dbReference type="InterPro" id="IPR013126">
    <property type="entry name" value="Hsp_70_fam"/>
</dbReference>
<dbReference type="NCBIfam" id="NF001413">
    <property type="entry name" value="PRK00290.1"/>
    <property type="match status" value="1"/>
</dbReference>
<dbReference type="PANTHER" id="PTHR19375">
    <property type="entry name" value="HEAT SHOCK PROTEIN 70KDA"/>
    <property type="match status" value="1"/>
</dbReference>
<dbReference type="Pfam" id="PF00012">
    <property type="entry name" value="HSP70"/>
    <property type="match status" value="1"/>
</dbReference>
<dbReference type="PRINTS" id="PR00301">
    <property type="entry name" value="HEATSHOCK70"/>
</dbReference>
<dbReference type="SUPFAM" id="SSF53067">
    <property type="entry name" value="Actin-like ATPase domain"/>
    <property type="match status" value="2"/>
</dbReference>
<dbReference type="SUPFAM" id="SSF100934">
    <property type="entry name" value="Heat shock protein 70kD (HSP70), C-terminal subdomain"/>
    <property type="match status" value="1"/>
</dbReference>
<dbReference type="SUPFAM" id="SSF100920">
    <property type="entry name" value="Heat shock protein 70kD (HSP70), peptide-binding domain"/>
    <property type="match status" value="1"/>
</dbReference>
<dbReference type="PROSITE" id="PS00297">
    <property type="entry name" value="HSP70_1"/>
    <property type="match status" value="1"/>
</dbReference>
<dbReference type="PROSITE" id="PS00329">
    <property type="entry name" value="HSP70_2"/>
    <property type="match status" value="1"/>
</dbReference>
<dbReference type="PROSITE" id="PS01036">
    <property type="entry name" value="HSP70_3"/>
    <property type="match status" value="1"/>
</dbReference>
<gene>
    <name type="primary">hsp70</name>
</gene>
<proteinExistence type="evidence at transcript level"/>
<evidence type="ECO:0000256" key="1">
    <source>
        <dbReference type="SAM" id="MobiDB-lite"/>
    </source>
</evidence>
<evidence type="ECO:0000305" key="2"/>
<keyword id="KW-0067">ATP-binding</keyword>
<keyword id="KW-0547">Nucleotide-binding</keyword>
<keyword id="KW-1185">Reference proteome</keyword>
<keyword id="KW-0346">Stress response</keyword>